<feature type="chain" id="PRO_0000108325" description="Cytochrome c">
    <location>
        <begin position="1"/>
        <end position="109"/>
    </location>
</feature>
<feature type="binding site" description="covalent" evidence="1 2">
    <location>
        <position position="20"/>
    </location>
    <ligand>
        <name>heme c</name>
        <dbReference type="ChEBI" id="CHEBI:61717"/>
    </ligand>
</feature>
<feature type="binding site" description="covalent" evidence="1 2">
    <location>
        <position position="23"/>
    </location>
    <ligand>
        <name>heme c</name>
        <dbReference type="ChEBI" id="CHEBI:61717"/>
    </ligand>
</feature>
<feature type="binding site" description="axial binding residue">
    <location>
        <position position="24"/>
    </location>
    <ligand>
        <name>heme c</name>
        <dbReference type="ChEBI" id="CHEBI:61717"/>
    </ligand>
    <ligandPart>
        <name>Fe</name>
        <dbReference type="ChEBI" id="CHEBI:18248"/>
    </ligandPart>
</feature>
<feature type="binding site" description="axial binding residue">
    <location>
        <position position="86"/>
    </location>
    <ligand>
        <name>heme c</name>
        <dbReference type="ChEBI" id="CHEBI:61717"/>
    </ligand>
    <ligandPart>
        <name>Fe</name>
        <dbReference type="ChEBI" id="CHEBI:18248"/>
    </ligandPart>
</feature>
<feature type="modified residue" description="N6,N6-dimethyllysine; alternate" evidence="2">
    <location>
        <position position="61"/>
    </location>
</feature>
<feature type="modified residue" description="N6-methyllysine; alternate" evidence="2">
    <location>
        <position position="61"/>
    </location>
</feature>
<feature type="modified residue" description="N6,N6,N6-trimethyllysine" evidence="2">
    <location>
        <position position="78"/>
    </location>
</feature>
<feature type="modified residue" description="N6,N6,N6-trimethyllysine" evidence="2">
    <location>
        <position position="79"/>
    </location>
</feature>
<name>CYC_WICAO</name>
<sequence length="109" mass="12064">PAPFKKGSEKKGATLFKTRCLQCHTVEKGGPHKVGPNLHGIFGRQSGKAEGYSYTDANIKKAVEWSEQTMSDYLENPKKYIPGTKMAFGGLKKEKDRNDLVTYLANATK</sequence>
<dbReference type="PIR" id="A00035">
    <property type="entry name" value="CCHQ"/>
</dbReference>
<dbReference type="SMR" id="P00042"/>
<dbReference type="iPTMnet" id="P00042"/>
<dbReference type="GO" id="GO:0005758">
    <property type="term" value="C:mitochondrial intermembrane space"/>
    <property type="evidence" value="ECO:0007669"/>
    <property type="project" value="UniProtKB-SubCell"/>
</dbReference>
<dbReference type="GO" id="GO:0009055">
    <property type="term" value="F:electron transfer activity"/>
    <property type="evidence" value="ECO:0007669"/>
    <property type="project" value="InterPro"/>
</dbReference>
<dbReference type="GO" id="GO:0020037">
    <property type="term" value="F:heme binding"/>
    <property type="evidence" value="ECO:0007669"/>
    <property type="project" value="InterPro"/>
</dbReference>
<dbReference type="GO" id="GO:0046872">
    <property type="term" value="F:metal ion binding"/>
    <property type="evidence" value="ECO:0007669"/>
    <property type="project" value="UniProtKB-KW"/>
</dbReference>
<dbReference type="FunFam" id="1.10.760.10:FF:000001">
    <property type="entry name" value="Cytochrome c iso-1"/>
    <property type="match status" value="1"/>
</dbReference>
<dbReference type="Gene3D" id="1.10.760.10">
    <property type="entry name" value="Cytochrome c-like domain"/>
    <property type="match status" value="1"/>
</dbReference>
<dbReference type="InterPro" id="IPR009056">
    <property type="entry name" value="Cyt_c-like_dom"/>
</dbReference>
<dbReference type="InterPro" id="IPR036909">
    <property type="entry name" value="Cyt_c-like_dom_sf"/>
</dbReference>
<dbReference type="InterPro" id="IPR002327">
    <property type="entry name" value="Cyt_c_1A/1B"/>
</dbReference>
<dbReference type="PANTHER" id="PTHR11961">
    <property type="entry name" value="CYTOCHROME C"/>
    <property type="match status" value="1"/>
</dbReference>
<dbReference type="Pfam" id="PF00034">
    <property type="entry name" value="Cytochrom_C"/>
    <property type="match status" value="1"/>
</dbReference>
<dbReference type="PRINTS" id="PR00604">
    <property type="entry name" value="CYTCHRMECIAB"/>
</dbReference>
<dbReference type="SUPFAM" id="SSF46626">
    <property type="entry name" value="Cytochrome c"/>
    <property type="match status" value="1"/>
</dbReference>
<dbReference type="PROSITE" id="PS51007">
    <property type="entry name" value="CYTC"/>
    <property type="match status" value="1"/>
</dbReference>
<keyword id="KW-0903">Direct protein sequencing</keyword>
<keyword id="KW-0249">Electron transport</keyword>
<keyword id="KW-0349">Heme</keyword>
<keyword id="KW-0408">Iron</keyword>
<keyword id="KW-0479">Metal-binding</keyword>
<keyword id="KW-0488">Methylation</keyword>
<keyword id="KW-0496">Mitochondrion</keyword>
<keyword id="KW-0679">Respiratory chain</keyword>
<keyword id="KW-0813">Transport</keyword>
<evidence type="ECO:0000255" key="1">
    <source>
        <dbReference type="PROSITE-ProRule" id="PRU00433"/>
    </source>
</evidence>
<evidence type="ECO:0000269" key="2">
    <source>
    </source>
</evidence>
<evidence type="ECO:0000305" key="3"/>
<protein>
    <recommendedName>
        <fullName>Cytochrome c</fullName>
    </recommendedName>
</protein>
<reference key="1">
    <citation type="journal article" date="1981" name="Eur. J. Biochem.">
        <title>Amino-acid sequence of the cytochrome c from the yeast Hansenula anomala. Identification of three methylated positions.</title>
        <authorList>
            <person name="Becam A.-M."/>
            <person name="Lederer F."/>
        </authorList>
    </citation>
    <scope>PROTEIN SEQUENCE</scope>
    <scope>METHYLATION AT LYS-61; LYS-78 AND LYS-79</scope>
</reference>
<comment type="function">
    <text>Electron carrier protein. The oxidized form of the cytochrome c heme group can accept an electron from the heme group of the cytochrome c1 subunit of cytochrome reductase. Cytochrome c then transfers this electron to the cytochrome oxidase complex, the final protein carrier in the mitochondrial electron-transport chain.</text>
</comment>
<comment type="subcellular location">
    <subcellularLocation>
        <location>Mitochondrion intermembrane space</location>
    </subcellularLocation>
    <text>Loosely associated with the inner membrane.</text>
</comment>
<comment type="PTM">
    <text>Binds 1 heme c group covalently per subunit.</text>
</comment>
<comment type="similarity">
    <text evidence="3">Belongs to the cytochrome c family.</text>
</comment>
<comment type="online information" name="Protein Spotlight">
    <link uri="https://www.proteinspotlight.org/back_issues/076"/>
    <text>Life shuttle - Issue 76 of November 2006</text>
</comment>
<organism>
    <name type="scientific">Wickerhamomyces anomalus</name>
    <name type="common">Yeast</name>
    <name type="synonym">Hansenula anomala</name>
    <dbReference type="NCBI Taxonomy" id="4927"/>
    <lineage>
        <taxon>Eukaryota</taxon>
        <taxon>Fungi</taxon>
        <taxon>Dikarya</taxon>
        <taxon>Ascomycota</taxon>
        <taxon>Saccharomycotina</taxon>
        <taxon>Saccharomycetes</taxon>
        <taxon>Phaffomycetales</taxon>
        <taxon>Wickerhamomycetaceae</taxon>
        <taxon>Wickerhamomyces</taxon>
    </lineage>
</organism>
<accession>P00042</accession>
<proteinExistence type="evidence at protein level"/>